<evidence type="ECO:0000250" key="1">
    <source>
        <dbReference type="UniProtKB" id="O95461"/>
    </source>
</evidence>
<evidence type="ECO:0000250" key="2">
    <source>
        <dbReference type="UniProtKB" id="Q5XPT3"/>
    </source>
</evidence>
<evidence type="ECO:0000250" key="3">
    <source>
        <dbReference type="UniProtKB" id="Q8N3Y3"/>
    </source>
</evidence>
<evidence type="ECO:0000255" key="4"/>
<evidence type="ECO:0000305" key="5"/>
<feature type="chain" id="PRO_0000226815" description="Xylosyl- and glucuronyltransferase LARGE2s">
    <location>
        <begin position="1"/>
        <end position="750"/>
    </location>
</feature>
<feature type="topological domain" description="Cytoplasmic" evidence="4">
    <location>
        <begin position="1"/>
        <end position="10"/>
    </location>
</feature>
<feature type="transmembrane region" description="Helical; Signal-anchor for type II membrane protein" evidence="4">
    <location>
        <begin position="11"/>
        <end position="31"/>
    </location>
</feature>
<feature type="topological domain" description="Lumenal" evidence="4">
    <location>
        <begin position="32"/>
        <end position="750"/>
    </location>
</feature>
<feature type="region of interest" description="Xylosyltransferase activity" evidence="1">
    <location>
        <begin position="132"/>
        <end position="407"/>
    </location>
</feature>
<feature type="region of interest" description="Glucuronyltransferase activity" evidence="1">
    <location>
        <begin position="408"/>
        <end position="750"/>
    </location>
</feature>
<feature type="binding site" evidence="3">
    <location>
        <position position="236"/>
    </location>
    <ligand>
        <name>Mn(2+)</name>
        <dbReference type="ChEBI" id="CHEBI:29035"/>
        <label>1</label>
    </ligand>
</feature>
<feature type="binding site" evidence="3">
    <location>
        <position position="238"/>
    </location>
    <ligand>
        <name>Mn(2+)</name>
        <dbReference type="ChEBI" id="CHEBI:29035"/>
        <label>1</label>
    </ligand>
</feature>
<feature type="binding site" evidence="3">
    <location>
        <position position="557"/>
    </location>
    <ligand>
        <name>Mn(2+)</name>
        <dbReference type="ChEBI" id="CHEBI:29035"/>
        <label>2</label>
    </ligand>
</feature>
<feature type="binding site" evidence="3">
    <location>
        <position position="559"/>
    </location>
    <ligand>
        <name>Mn(2+)</name>
        <dbReference type="ChEBI" id="CHEBI:29035"/>
        <label>2</label>
    </ligand>
</feature>
<feature type="glycosylation site" description="N-linked (GlcNAc...) asparagine" evidence="4">
    <location>
        <position position="116"/>
    </location>
</feature>
<feature type="glycosylation site" description="N-linked (GlcNAc...) asparagine" evidence="4">
    <location>
        <position position="142"/>
    </location>
</feature>
<feature type="glycosylation site" description="N-linked (GlcNAc...) asparagine" evidence="4">
    <location>
        <position position="228"/>
    </location>
</feature>
<feature type="glycosylation site" description="N-linked (GlcNAc...) asparagine" evidence="4">
    <location>
        <position position="266"/>
    </location>
</feature>
<feature type="sequence conflict" description="In Ref. 2; CAK04442." evidence="5" ref="2">
    <original>A</original>
    <variation>V</variation>
    <location>
        <position position="87"/>
    </location>
</feature>
<reference key="1">
    <citation type="journal article" date="2005" name="Glycobiology">
        <title>Characterization of the LARGE family of putative glycosyltransferases associated with dystroglycanopathies.</title>
        <authorList>
            <person name="Grewal P.K."/>
            <person name="McLaughlan J.M."/>
            <person name="Moore C.J."/>
            <person name="Browning C.A."/>
            <person name="Hewitt J.E."/>
        </authorList>
    </citation>
    <scope>NUCLEOTIDE SEQUENCE [MRNA]</scope>
</reference>
<reference key="2">
    <citation type="journal article" date="2013" name="Nature">
        <title>The zebrafish reference genome sequence and its relationship to the human genome.</title>
        <authorList>
            <person name="Howe K."/>
            <person name="Clark M.D."/>
            <person name="Torroja C.F."/>
            <person name="Torrance J."/>
            <person name="Berthelot C."/>
            <person name="Muffato M."/>
            <person name="Collins J.E."/>
            <person name="Humphray S."/>
            <person name="McLaren K."/>
            <person name="Matthews L."/>
            <person name="McLaren S."/>
            <person name="Sealy I."/>
            <person name="Caccamo M."/>
            <person name="Churcher C."/>
            <person name="Scott C."/>
            <person name="Barrett J.C."/>
            <person name="Koch R."/>
            <person name="Rauch G.J."/>
            <person name="White S."/>
            <person name="Chow W."/>
            <person name="Kilian B."/>
            <person name="Quintais L.T."/>
            <person name="Guerra-Assuncao J.A."/>
            <person name="Zhou Y."/>
            <person name="Gu Y."/>
            <person name="Yen J."/>
            <person name="Vogel J.H."/>
            <person name="Eyre T."/>
            <person name="Redmond S."/>
            <person name="Banerjee R."/>
            <person name="Chi J."/>
            <person name="Fu B."/>
            <person name="Langley E."/>
            <person name="Maguire S.F."/>
            <person name="Laird G.K."/>
            <person name="Lloyd D."/>
            <person name="Kenyon E."/>
            <person name="Donaldson S."/>
            <person name="Sehra H."/>
            <person name="Almeida-King J."/>
            <person name="Loveland J."/>
            <person name="Trevanion S."/>
            <person name="Jones M."/>
            <person name="Quail M."/>
            <person name="Willey D."/>
            <person name="Hunt A."/>
            <person name="Burton J."/>
            <person name="Sims S."/>
            <person name="McLay K."/>
            <person name="Plumb B."/>
            <person name="Davis J."/>
            <person name="Clee C."/>
            <person name="Oliver K."/>
            <person name="Clark R."/>
            <person name="Riddle C."/>
            <person name="Elliot D."/>
            <person name="Threadgold G."/>
            <person name="Harden G."/>
            <person name="Ware D."/>
            <person name="Begum S."/>
            <person name="Mortimore B."/>
            <person name="Kerry G."/>
            <person name="Heath P."/>
            <person name="Phillimore B."/>
            <person name="Tracey A."/>
            <person name="Corby N."/>
            <person name="Dunn M."/>
            <person name="Johnson C."/>
            <person name="Wood J."/>
            <person name="Clark S."/>
            <person name="Pelan S."/>
            <person name="Griffiths G."/>
            <person name="Smith M."/>
            <person name="Glithero R."/>
            <person name="Howden P."/>
            <person name="Barker N."/>
            <person name="Lloyd C."/>
            <person name="Stevens C."/>
            <person name="Harley J."/>
            <person name="Holt K."/>
            <person name="Panagiotidis G."/>
            <person name="Lovell J."/>
            <person name="Beasley H."/>
            <person name="Henderson C."/>
            <person name="Gordon D."/>
            <person name="Auger K."/>
            <person name="Wright D."/>
            <person name="Collins J."/>
            <person name="Raisen C."/>
            <person name="Dyer L."/>
            <person name="Leung K."/>
            <person name="Robertson L."/>
            <person name="Ambridge K."/>
            <person name="Leongamornlert D."/>
            <person name="McGuire S."/>
            <person name="Gilderthorp R."/>
            <person name="Griffiths C."/>
            <person name="Manthravadi D."/>
            <person name="Nichol S."/>
            <person name="Barker G."/>
            <person name="Whitehead S."/>
            <person name="Kay M."/>
            <person name="Brown J."/>
            <person name="Murnane C."/>
            <person name="Gray E."/>
            <person name="Humphries M."/>
            <person name="Sycamore N."/>
            <person name="Barker D."/>
            <person name="Saunders D."/>
            <person name="Wallis J."/>
            <person name="Babbage A."/>
            <person name="Hammond S."/>
            <person name="Mashreghi-Mohammadi M."/>
            <person name="Barr L."/>
            <person name="Martin S."/>
            <person name="Wray P."/>
            <person name="Ellington A."/>
            <person name="Matthews N."/>
            <person name="Ellwood M."/>
            <person name="Woodmansey R."/>
            <person name="Clark G."/>
            <person name="Cooper J."/>
            <person name="Tromans A."/>
            <person name="Grafham D."/>
            <person name="Skuce C."/>
            <person name="Pandian R."/>
            <person name="Andrews R."/>
            <person name="Harrison E."/>
            <person name="Kimberley A."/>
            <person name="Garnett J."/>
            <person name="Fosker N."/>
            <person name="Hall R."/>
            <person name="Garner P."/>
            <person name="Kelly D."/>
            <person name="Bird C."/>
            <person name="Palmer S."/>
            <person name="Gehring I."/>
            <person name="Berger A."/>
            <person name="Dooley C.M."/>
            <person name="Ersan-Urun Z."/>
            <person name="Eser C."/>
            <person name="Geiger H."/>
            <person name="Geisler M."/>
            <person name="Karotki L."/>
            <person name="Kirn A."/>
            <person name="Konantz J."/>
            <person name="Konantz M."/>
            <person name="Oberlander M."/>
            <person name="Rudolph-Geiger S."/>
            <person name="Teucke M."/>
            <person name="Lanz C."/>
            <person name="Raddatz G."/>
            <person name="Osoegawa K."/>
            <person name="Zhu B."/>
            <person name="Rapp A."/>
            <person name="Widaa S."/>
            <person name="Langford C."/>
            <person name="Yang F."/>
            <person name="Schuster S.C."/>
            <person name="Carter N.P."/>
            <person name="Harrow J."/>
            <person name="Ning Z."/>
            <person name="Herrero J."/>
            <person name="Searle S.M."/>
            <person name="Enright A."/>
            <person name="Geisler R."/>
            <person name="Plasterk R.H."/>
            <person name="Lee C."/>
            <person name="Westerfield M."/>
            <person name="de Jong P.J."/>
            <person name="Zon L.I."/>
            <person name="Postlethwait J.H."/>
            <person name="Nusslein-Volhard C."/>
            <person name="Hubbard T.J."/>
            <person name="Roest Crollius H."/>
            <person name="Rogers J."/>
            <person name="Stemple D.L."/>
        </authorList>
    </citation>
    <scope>NUCLEOTIDE SEQUENCE [LARGE SCALE GENOMIC DNA]</scope>
    <source>
        <strain>Tuebingen</strain>
    </source>
</reference>
<proteinExistence type="evidence at transcript level"/>
<sequence length="750" mass="86987">MLCPCRGKLKLLVVSLSFVILFTWLYLLVGNSENGRSLLLSACLVESTEARLLERDVLASRVREVEEENRQIRLQLSQSQGLAGQPAEGNYGNQQWVASADTGPEDVENTAEERANHSECSRSPTAEKCELLHVACVCAGHNASRDVVTLVKSILFHRRNPLHFHFITDTVANQILSTLFQSWMVPSVQVSFYDADELKSEVSWIPNKHYSGIYGLMKLTLTKALPSNLSKVIVLDTDITFATDIAELWAIFRKFTEKQVIGLVENQSDWYLGNLWKNHKPWPALGRGFNTGVILLYLERLRRMGWEQMWRLTAERELMSMLSTSLADQDIFNAFIKQNPVLVHQLPCFWNVQLSDHTRSEQCYTEVSDLKVIHWNSPKKLRVKNKHVEFFRNLYLTFLEYDGNLLRRELFGCPSQASSESTVLQQALEELDEDDQCYDFRRERIMLHRVHLYFLQYEYSPTDDGTDITLVAQLSMDRLQMLEAICKHWEGPISLALYMSDAEAQQFLRYAQASEVLKNRKNVGYHIVYKEGQFYPVNLVRNVALRNVNTPYVFLTDVDFLPMYGLYDYLRKSIVQLDMANTKKALVVPAFETLRYRLSFPKSKAELLSMLDMGTLYTFRYHVWTKGHAPTNYAKWRTATTPYKVEWEADFEPYVVVRRDCPEYDQRFVGFGWNKVSHIMELDAQEYDLIVLPNAFMIHMPHAPSFDISKFRSSPSYRYCLTTLKDEFHQDLSRKYGSAALKYLTAQRNI</sequence>
<organism>
    <name type="scientific">Danio rerio</name>
    <name type="common">Zebrafish</name>
    <name type="synonym">Brachydanio rerio</name>
    <dbReference type="NCBI Taxonomy" id="7955"/>
    <lineage>
        <taxon>Eukaryota</taxon>
        <taxon>Metazoa</taxon>
        <taxon>Chordata</taxon>
        <taxon>Craniata</taxon>
        <taxon>Vertebrata</taxon>
        <taxon>Euteleostomi</taxon>
        <taxon>Actinopterygii</taxon>
        <taxon>Neopterygii</taxon>
        <taxon>Teleostei</taxon>
        <taxon>Ostariophysi</taxon>
        <taxon>Cypriniformes</taxon>
        <taxon>Danionidae</taxon>
        <taxon>Danioninae</taxon>
        <taxon>Danio</taxon>
    </lineage>
</organism>
<protein>
    <recommendedName>
        <fullName evidence="3">Xylosyl- and glucuronyltransferase LARGE2s</fullName>
        <ecNumber evidence="2">2.4.-.-</ecNumber>
    </recommendedName>
    <alternativeName>
        <fullName>Glycosyltransferase-like 1B</fullName>
    </alternativeName>
    <alternativeName>
        <fullName evidence="3">LARGE xylosyl- and glucuronyltransferase 2</fullName>
    </alternativeName>
    <domain>
        <recommendedName>
            <fullName evidence="5">Alpha-1,3-xylosyltransferase LARGE2</fullName>
            <ecNumber evidence="2">2.4.2.-</ecNumber>
        </recommendedName>
    </domain>
    <domain>
        <recommendedName>
            <fullName evidence="5">Beta-1,3-glucuronyltransferase LARGE2</fullName>
            <ecNumber evidence="2">2.4.1.-</ecNumber>
        </recommendedName>
    </domain>
</protein>
<keyword id="KW-0325">Glycoprotein</keyword>
<keyword id="KW-0328">Glycosyltransferase</keyword>
<keyword id="KW-0333">Golgi apparatus</keyword>
<keyword id="KW-0464">Manganese</keyword>
<keyword id="KW-0472">Membrane</keyword>
<keyword id="KW-0479">Metal-binding</keyword>
<keyword id="KW-0511">Multifunctional enzyme</keyword>
<keyword id="KW-1185">Reference proteome</keyword>
<keyword id="KW-0735">Signal-anchor</keyword>
<keyword id="KW-0808">Transferase</keyword>
<keyword id="KW-0812">Transmembrane</keyword>
<keyword id="KW-1133">Transmembrane helix</keyword>
<accession>Q66PG1</accession>
<accession>Q1LUJ7</accession>
<accession>Q1LV71</accession>
<comment type="function">
    <text evidence="2 3">Bifunctional glycosyltransferase with both alpha-1,3-xylosyltransferase and beta-1,3-glucuronyltransferase activities involved in the maturation of alpha-dystroglycan (DAG1) by glycosylation leading to DAG1 binding to laminin G-like domain-containing extracellular proteins with high affinity and in a phosphorylated-O-mannosyl trisaccharide dependent manner. Elongates the glucuronyl-beta-1,4-xylose-beta disaccharide primer structure by adding repeating units [-3-Xylose-alpha-1,3-GlcA-beta-1-] to produce a heteropolysaccharide (By similarity). Supports the maturation of DAG1 more effectively than LARGE1 (By similarity). In addition, can modify both heparan sulfate (HS)- and chondroitin/dermatan sulfate (CS/DS)-proteoglycans (PGs), namely GPC4, with a glycosaminoglycan (GAG)-like polysaccharide composed of xylose and glucuronic acid to confer laminin binding (By similarity).</text>
</comment>
<comment type="catalytic activity">
    <reaction evidence="2">
        <text>3-O-[beta-D-GlcA-(1-&gt;3)-beta-D-Xyl-(1-&gt;4)-Rib-ol-P-Rib-ol-P-3-beta-D-GalNAc-(1-&gt;3)-beta-D-GlcNAc-(1-&gt;4)-(O-6-P-alpha-D-Man)]-Thr-[protein] + UDP-alpha-D-xylose = 3-O-[alpha-D-Xyl-(1-&gt;3)-beta-D-GlcA-(1-&gt;4)-beta-D-Xyl-(1-&gt;4)-Rib-ol-P-Rib-ol-P-3-beta-D-GalNAc-(1-&gt;3)-beta-D-GlcNAc-(1-&gt;4)-(O-6-P-alpha-D-Man)]-Thr-[protein] + UDP + H(+)</text>
        <dbReference type="Rhea" id="RHEA:57336"/>
        <dbReference type="Rhea" id="RHEA-COMP:17482"/>
        <dbReference type="Rhea" id="RHEA-COMP:17483"/>
        <dbReference type="ChEBI" id="CHEBI:15378"/>
        <dbReference type="ChEBI" id="CHEBI:57632"/>
        <dbReference type="ChEBI" id="CHEBI:58223"/>
        <dbReference type="ChEBI" id="CHEBI:177336"/>
        <dbReference type="ChEBI" id="CHEBI:177352"/>
    </reaction>
    <physiologicalReaction direction="left-to-right" evidence="2">
        <dbReference type="Rhea" id="RHEA:57337"/>
    </physiologicalReaction>
</comment>
<comment type="catalytic activity">
    <reaction evidence="2">
        <text>3-O-{(1-&gt;[3)-alpha-D-Xyl-(1-&gt;3)-beta-D-GlcA-(1-&gt;](n)-4)-beta-D-Xyl-(1-&gt;4)-Rib-ol-P-Rib-ol-P-3-beta-D-GalNAc-(1-&gt;3)-beta-D-GlcNAc-(1-&gt;4)-O-6-P-alpha-D-Man}-L-Thr-[protein] + UDP-alpha-D-glucuronate = 3-O-{beta-D-GlcA-(1-&gt;[3)-alpha-D-Xyl-(1-&gt;3)-beta-D-GlcA-(1-&gt;](n)-4)-beta-D-Xyl-(1-&gt;4)-Rib-ol-P-Rib-ol-P-3-beta-D-GalNAc-(1-&gt;3)-beta-D-GlcNAc-(1-&gt;4)-O-6-P-alpha-D-Man}-L-Thr-[protein] + UDP + H(+)</text>
        <dbReference type="Rhea" id="RHEA:67924"/>
        <dbReference type="Rhea" id="RHEA-COMP:17484"/>
        <dbReference type="Rhea" id="RHEA-COMP:17486"/>
        <dbReference type="ChEBI" id="CHEBI:15378"/>
        <dbReference type="ChEBI" id="CHEBI:58052"/>
        <dbReference type="ChEBI" id="CHEBI:58223"/>
        <dbReference type="ChEBI" id="CHEBI:177354"/>
        <dbReference type="ChEBI" id="CHEBI:177355"/>
    </reaction>
    <physiologicalReaction direction="left-to-right" evidence="2">
        <dbReference type="Rhea" id="RHEA:67925"/>
    </physiologicalReaction>
</comment>
<comment type="catalytic activity">
    <reaction evidence="2">
        <text>3-O-{beta-D-GlcA-(1-&gt;[3)-alpha-D-Xyl-(1-&gt;3)-beta-D-GlcA-(1-&gt;](n)-4)-beta-D-Xyl-(1-&gt;4)-Rib-ol-P-Rib-ol-P-3-beta-D-GalNAc-(1-&gt;3)-beta-D-GlcNAc-(1-&gt;4)-O-6-P-alpha-D-Man}-L-Thr-[protein] + UDP-alpha-D-xylose = 3-O-{(1-&gt;[3)-alpha-D-Xyl-(1-&gt;3)-beta-D-GlcA-(1-&gt;](n+1)-4)-beta-D-Xyl-(1-&gt;4)-Rib-ol-P-Rib-ol-P-3-beta-D-GalNAc-(1-&gt;3)-beta-D-GlcNAc-(1-&gt;4)-O-6-P-alpha-D-Man}-L-Thr-[protein] + UDP + H(+)</text>
        <dbReference type="Rhea" id="RHEA:68368"/>
        <dbReference type="Rhea" id="RHEA-COMP:17485"/>
        <dbReference type="Rhea" id="RHEA-COMP:17486"/>
        <dbReference type="ChEBI" id="CHEBI:15378"/>
        <dbReference type="ChEBI" id="CHEBI:57632"/>
        <dbReference type="ChEBI" id="CHEBI:58223"/>
        <dbReference type="ChEBI" id="CHEBI:177354"/>
        <dbReference type="ChEBI" id="CHEBI:177355"/>
    </reaction>
    <physiologicalReaction direction="left-to-right" evidence="2">
        <dbReference type="Rhea" id="RHEA:68369"/>
    </physiologicalReaction>
</comment>
<comment type="cofactor">
    <cofactor evidence="2">
        <name>Mn(2+)</name>
        <dbReference type="ChEBI" id="CHEBI:29035"/>
    </cofactor>
    <text evidence="2">Binds 2 Mn(2+) ions per subunit. The xylosyltransferase part binds one Mn(2+) and the beta-1,3-glucuronyltransferase part binds one Mn(2+).</text>
</comment>
<comment type="pathway">
    <text evidence="2">Protein modification; protein glycosylation.</text>
</comment>
<comment type="subcellular location">
    <subcellularLocation>
        <location evidence="2">Golgi apparatus membrane</location>
        <topology evidence="2">Single-pass type II membrane protein</topology>
    </subcellularLocation>
</comment>
<comment type="similarity">
    <text evidence="5">In the C-terminal section; belongs to the glycosyltransferase 49 family.</text>
</comment>
<comment type="similarity">
    <text evidence="5">In the N-terminal section; belongs to the glycosyltransferase 8 family.</text>
</comment>
<gene>
    <name evidence="3" type="primary">large2</name>
    <name type="synonym">gyltl1b</name>
    <name type="ORF">si:ch211-206g24.1</name>
    <name type="ORF">si:ch211-282n12.1</name>
</gene>
<dbReference type="EC" id="2.4.-.-" evidence="2"/>
<dbReference type="EC" id="2.4.2.-" evidence="2"/>
<dbReference type="EC" id="2.4.1.-" evidence="2"/>
<dbReference type="EMBL" id="AY662339">
    <property type="protein sequence ID" value="AAU12252.1"/>
    <property type="molecule type" value="mRNA"/>
</dbReference>
<dbReference type="EMBL" id="BX908385">
    <property type="protein sequence ID" value="CAK04901.1"/>
    <property type="molecule type" value="Genomic_DNA"/>
</dbReference>
<dbReference type="EMBL" id="BX936304">
    <property type="protein sequence ID" value="CAK04442.1"/>
    <property type="molecule type" value="Genomic_DNA"/>
</dbReference>
<dbReference type="RefSeq" id="NP_001004538.1">
    <property type="nucleotide sequence ID" value="NM_001004538.1"/>
</dbReference>
<dbReference type="RefSeq" id="XP_017207405.1">
    <property type="nucleotide sequence ID" value="XM_017351916.3"/>
</dbReference>
<dbReference type="RefSeq" id="XP_021323310.1">
    <property type="nucleotide sequence ID" value="XM_021467635.2"/>
</dbReference>
<dbReference type="RefSeq" id="XP_021323311.1">
    <property type="nucleotide sequence ID" value="XM_021467636.2"/>
</dbReference>
<dbReference type="SMR" id="Q66PG1"/>
<dbReference type="FunCoup" id="Q66PG1">
    <property type="interactions" value="35"/>
</dbReference>
<dbReference type="STRING" id="7955.ENSDARP00000130814"/>
<dbReference type="CAZy" id="GT49">
    <property type="family name" value="Glycosyltransferase Family 49"/>
</dbReference>
<dbReference type="CAZy" id="GT8">
    <property type="family name" value="Glycosyltransferase Family 8"/>
</dbReference>
<dbReference type="GlyCosmos" id="Q66PG1">
    <property type="glycosylation" value="4 sites, No reported glycans"/>
</dbReference>
<dbReference type="PaxDb" id="7955-ENSDARP00000019858"/>
<dbReference type="Ensembl" id="ENSDART00000015786">
    <property type="protein sequence ID" value="ENSDARP00000019858"/>
    <property type="gene ID" value="ENSDARG00000017058"/>
</dbReference>
<dbReference type="Ensembl" id="ENSDART00000127953">
    <property type="protein sequence ID" value="ENSDARP00000108343"/>
    <property type="gene ID" value="ENSDARG00000017058"/>
</dbReference>
<dbReference type="Ensembl" id="ENSDART00000172328">
    <property type="protein sequence ID" value="ENSDARP00000130814"/>
    <property type="gene ID" value="ENSDARG00000017058"/>
</dbReference>
<dbReference type="GeneID" id="446214"/>
<dbReference type="KEGG" id="dre:446214"/>
<dbReference type="AGR" id="ZFIN:ZDB-GENE-050419-253"/>
<dbReference type="CTD" id="120071"/>
<dbReference type="ZFIN" id="ZDB-GENE-050419-253">
    <property type="gene designation" value="large2"/>
</dbReference>
<dbReference type="eggNOG" id="KOG3765">
    <property type="taxonomic scope" value="Eukaryota"/>
</dbReference>
<dbReference type="InParanoid" id="Q66PG1"/>
<dbReference type="OMA" id="LPCIWNV"/>
<dbReference type="PhylomeDB" id="Q66PG1"/>
<dbReference type="TreeFam" id="TF319168"/>
<dbReference type="Reactome" id="R-DRE-5173105">
    <property type="pathway name" value="O-linked glycosylation"/>
</dbReference>
<dbReference type="UniPathway" id="UPA00378"/>
<dbReference type="PRO" id="PR:Q66PG1"/>
<dbReference type="Proteomes" id="UP000000437">
    <property type="component" value="Chromosome 18"/>
</dbReference>
<dbReference type="Bgee" id="ENSDARG00000017058">
    <property type="expression patterns" value="Expressed in retina and 45 other cell types or tissues"/>
</dbReference>
<dbReference type="ExpressionAtlas" id="Q66PG1">
    <property type="expression patterns" value="baseline and differential"/>
</dbReference>
<dbReference type="GO" id="GO:0005794">
    <property type="term" value="C:Golgi apparatus"/>
    <property type="evidence" value="ECO:0000250"/>
    <property type="project" value="ZFIN"/>
</dbReference>
<dbReference type="GO" id="GO:0000139">
    <property type="term" value="C:Golgi membrane"/>
    <property type="evidence" value="ECO:0007669"/>
    <property type="project" value="UniProtKB-SubCell"/>
</dbReference>
<dbReference type="GO" id="GO:0015020">
    <property type="term" value="F:glucuronosyltransferase activity"/>
    <property type="evidence" value="ECO:0000250"/>
    <property type="project" value="UniProtKB"/>
</dbReference>
<dbReference type="GO" id="GO:0046872">
    <property type="term" value="F:metal ion binding"/>
    <property type="evidence" value="ECO:0007669"/>
    <property type="project" value="UniProtKB-KW"/>
</dbReference>
<dbReference type="GO" id="GO:0042285">
    <property type="term" value="F:xylosyltransferase activity"/>
    <property type="evidence" value="ECO:0000250"/>
    <property type="project" value="UniProtKB"/>
</dbReference>
<dbReference type="GO" id="GO:0006486">
    <property type="term" value="P:protein glycosylation"/>
    <property type="evidence" value="ECO:0000250"/>
    <property type="project" value="ZFIN"/>
</dbReference>
<dbReference type="GO" id="GO:0035269">
    <property type="term" value="P:protein O-linked mannosylation"/>
    <property type="evidence" value="ECO:0000250"/>
    <property type="project" value="UniProtKB"/>
</dbReference>
<dbReference type="CDD" id="cd06431">
    <property type="entry name" value="GT8_LARGE_C"/>
    <property type="match status" value="1"/>
</dbReference>
<dbReference type="FunFam" id="3.90.550.10:FF:000229">
    <property type="entry name" value="Glycosyltransferase-like protein LARGE"/>
    <property type="match status" value="1"/>
</dbReference>
<dbReference type="FunFam" id="3.90.550.10:FF:000016">
    <property type="entry name" value="LARGE xylosyl- and glucuronyltransferase 2"/>
    <property type="match status" value="1"/>
</dbReference>
<dbReference type="Gene3D" id="3.90.550.10">
    <property type="entry name" value="Spore Coat Polysaccharide Biosynthesis Protein SpsA, Chain A"/>
    <property type="match status" value="1"/>
</dbReference>
<dbReference type="InterPro" id="IPR002495">
    <property type="entry name" value="Glyco_trans_8"/>
</dbReference>
<dbReference type="InterPro" id="IPR029044">
    <property type="entry name" value="Nucleotide-diphossugar_trans"/>
</dbReference>
<dbReference type="InterPro" id="IPR051292">
    <property type="entry name" value="Xyl/GlcA_transferase"/>
</dbReference>
<dbReference type="PANTHER" id="PTHR12270">
    <property type="entry name" value="GLYCOSYLTRANSFERASE-RELATED"/>
    <property type="match status" value="1"/>
</dbReference>
<dbReference type="PANTHER" id="PTHR12270:SF23">
    <property type="entry name" value="XYLOSYL- AND GLUCURONYLTRANSFERASE LARGE2"/>
    <property type="match status" value="1"/>
</dbReference>
<dbReference type="Pfam" id="PF13896">
    <property type="entry name" value="Glyco_transf_49"/>
    <property type="match status" value="1"/>
</dbReference>
<dbReference type="Pfam" id="PF01501">
    <property type="entry name" value="Glyco_transf_8"/>
    <property type="match status" value="1"/>
</dbReference>
<dbReference type="SUPFAM" id="SSF53448">
    <property type="entry name" value="Nucleotide-diphospho-sugar transferases"/>
    <property type="match status" value="1"/>
</dbReference>
<name>LARG2_DANRE</name>